<dbReference type="EMBL" id="AK000181">
    <property type="protein sequence ID" value="BAA90994.1"/>
    <property type="molecule type" value="mRNA"/>
</dbReference>
<dbReference type="EMBL" id="AC055740">
    <property type="status" value="NOT_ANNOTATED_CDS"/>
    <property type="molecule type" value="Genomic_DNA"/>
</dbReference>
<dbReference type="EMBL" id="AC112128">
    <property type="status" value="NOT_ANNOTATED_CDS"/>
    <property type="molecule type" value="Genomic_DNA"/>
</dbReference>
<dbReference type="EMBL" id="BC117222">
    <property type="protein sequence ID" value="AAI17223.1"/>
    <property type="molecule type" value="mRNA"/>
</dbReference>
<dbReference type="CCDS" id="CCDS2974.1">
    <molecule id="Q9NXL6-1"/>
</dbReference>
<dbReference type="CCDS" id="CCDS77790.1">
    <molecule id="Q9NXL6-2"/>
</dbReference>
<dbReference type="RefSeq" id="NP_001295279.1">
    <molecule id="Q9NXL6-2"/>
    <property type="nucleotide sequence ID" value="NM_001308350.2"/>
</dbReference>
<dbReference type="RefSeq" id="NP_060169.2">
    <molecule id="Q9NXL6-1"/>
    <property type="nucleotide sequence ID" value="NM_017699.3"/>
</dbReference>
<dbReference type="PDB" id="8J6M">
    <property type="method" value="EM"/>
    <property type="resolution" value="2.77 A"/>
    <property type="chains" value="A/B=20-827"/>
</dbReference>
<dbReference type="PDB" id="8JUL">
    <property type="method" value="EM"/>
    <property type="resolution" value="2.92 A"/>
    <property type="chains" value="A/B=1-827"/>
</dbReference>
<dbReference type="PDB" id="8JUN">
    <property type="method" value="EM"/>
    <property type="resolution" value="2.38 A"/>
    <property type="chains" value="A/B=1-827"/>
</dbReference>
<dbReference type="PDB" id="8K13">
    <property type="method" value="EM"/>
    <property type="resolution" value="3.33 A"/>
    <property type="chains" value="A/B=21-827"/>
</dbReference>
<dbReference type="PDB" id="8K1B">
    <property type="method" value="EM"/>
    <property type="resolution" value="3.47 A"/>
    <property type="chains" value="A/B=47-300"/>
</dbReference>
<dbReference type="PDB" id="8K1D">
    <property type="method" value="EM"/>
    <property type="resolution" value="3.53 A"/>
    <property type="chains" value="A/B=301-827"/>
</dbReference>
<dbReference type="PDB" id="8KCW">
    <property type="method" value="EM"/>
    <property type="resolution" value="2.77 A"/>
    <property type="chains" value="A/C=1-827"/>
</dbReference>
<dbReference type="PDB" id="8KCX">
    <property type="method" value="EM"/>
    <property type="resolution" value="2.96 A"/>
    <property type="chains" value="A/C=1-827"/>
</dbReference>
<dbReference type="PDB" id="8V38">
    <property type="method" value="EM"/>
    <property type="resolution" value="3.50 A"/>
    <property type="chains" value="A/B=1-827"/>
</dbReference>
<dbReference type="PDB" id="8WOQ">
    <property type="method" value="EM"/>
    <property type="resolution" value="2.85 A"/>
    <property type="chains" value="A/B=1-827"/>
</dbReference>
<dbReference type="PDB" id="8WOR">
    <property type="method" value="EM"/>
    <property type="resolution" value="2.66 A"/>
    <property type="chains" value="A/B=1-827"/>
</dbReference>
<dbReference type="PDB" id="8WOS">
    <property type="method" value="EM"/>
    <property type="resolution" value="3.37 A"/>
    <property type="chains" value="A/B=1-827"/>
</dbReference>
<dbReference type="PDB" id="8WOT">
    <property type="method" value="EM"/>
    <property type="resolution" value="3.18 A"/>
    <property type="chains" value="A/B=1-827"/>
</dbReference>
<dbReference type="PDBsum" id="8J6M"/>
<dbReference type="PDBsum" id="8JUL"/>
<dbReference type="PDBsum" id="8JUN"/>
<dbReference type="PDBsum" id="8K13"/>
<dbReference type="PDBsum" id="8K1B"/>
<dbReference type="PDBsum" id="8K1D"/>
<dbReference type="PDBsum" id="8KCW"/>
<dbReference type="PDBsum" id="8KCX"/>
<dbReference type="PDBsum" id="8V38"/>
<dbReference type="PDBsum" id="8WOQ"/>
<dbReference type="PDBsum" id="8WOR"/>
<dbReference type="PDBsum" id="8WOS"/>
<dbReference type="PDBsum" id="8WOT"/>
<dbReference type="EMDB" id="EMD-36008"/>
<dbReference type="EMDB" id="EMD-36661"/>
<dbReference type="EMDB" id="EMD-36662"/>
<dbReference type="EMDB" id="EMD-36785"/>
<dbReference type="EMDB" id="EMD-36791"/>
<dbReference type="EMDB" id="EMD-36792"/>
<dbReference type="EMDB" id="EMD-37112"/>
<dbReference type="EMDB" id="EMD-37113"/>
<dbReference type="EMDB" id="EMD-37695"/>
<dbReference type="EMDB" id="EMD-37696"/>
<dbReference type="EMDB" id="EMD-37697"/>
<dbReference type="EMDB" id="EMD-37698"/>
<dbReference type="SMR" id="Q9NXL6"/>
<dbReference type="BioGRID" id="120197">
    <property type="interactions" value="4"/>
</dbReference>
<dbReference type="FunCoup" id="Q9NXL6">
    <property type="interactions" value="70"/>
</dbReference>
<dbReference type="IntAct" id="Q9NXL6">
    <property type="interactions" value="2"/>
</dbReference>
<dbReference type="MINT" id="Q9NXL6"/>
<dbReference type="STRING" id="9606.ENSP00000377416"/>
<dbReference type="TCDB" id="1.A.79.1.2">
    <property type="family name" value="the cholesterol uptake protein (chup) or double stranded rna uptake family"/>
</dbReference>
<dbReference type="GlyCosmos" id="Q9NXL6">
    <property type="glycosylation" value="8 sites, No reported glycans"/>
</dbReference>
<dbReference type="GlyGen" id="Q9NXL6">
    <property type="glycosylation" value="8 sites"/>
</dbReference>
<dbReference type="iPTMnet" id="Q9NXL6"/>
<dbReference type="PhosphoSitePlus" id="Q9NXL6"/>
<dbReference type="SwissPalm" id="Q9NXL6"/>
<dbReference type="BioMuta" id="SIDT1"/>
<dbReference type="DMDM" id="296452905"/>
<dbReference type="MassIVE" id="Q9NXL6"/>
<dbReference type="PaxDb" id="9606-ENSP00000264852"/>
<dbReference type="PeptideAtlas" id="Q9NXL6"/>
<dbReference type="ProteomicsDB" id="83110">
    <molecule id="Q9NXL6-1"/>
</dbReference>
<dbReference type="ProteomicsDB" id="83111">
    <molecule id="Q9NXL6-2"/>
</dbReference>
<dbReference type="Antibodypedia" id="32584">
    <property type="antibodies" value="154 antibodies from 27 providers"/>
</dbReference>
<dbReference type="DNASU" id="54847"/>
<dbReference type="Ensembl" id="ENST00000264852.9">
    <molecule id="Q9NXL6-1"/>
    <property type="protein sequence ID" value="ENSP00000264852.4"/>
    <property type="gene ID" value="ENSG00000072858.12"/>
</dbReference>
<dbReference type="Ensembl" id="ENST00000393830.5">
    <molecule id="Q9NXL6-2"/>
    <property type="protein sequence ID" value="ENSP00000377416.4"/>
    <property type="gene ID" value="ENSG00000072858.12"/>
</dbReference>
<dbReference type="GeneID" id="54847"/>
<dbReference type="KEGG" id="hsa:54847"/>
<dbReference type="MANE-Select" id="ENST00000264852.9">
    <property type="protein sequence ID" value="ENSP00000264852.4"/>
    <property type="RefSeq nucleotide sequence ID" value="NM_017699.3"/>
    <property type="RefSeq protein sequence ID" value="NP_060169.2"/>
</dbReference>
<dbReference type="UCSC" id="uc003eak.4">
    <molecule id="Q9NXL6-1"/>
    <property type="organism name" value="human"/>
</dbReference>
<dbReference type="AGR" id="HGNC:25967"/>
<dbReference type="CTD" id="54847"/>
<dbReference type="DisGeNET" id="54847"/>
<dbReference type="GeneCards" id="SIDT1"/>
<dbReference type="HGNC" id="HGNC:25967">
    <property type="gene designation" value="SIDT1"/>
</dbReference>
<dbReference type="HPA" id="ENSG00000072858">
    <property type="expression patterns" value="Tissue enhanced (salivary)"/>
</dbReference>
<dbReference type="MalaCards" id="SIDT1"/>
<dbReference type="MIM" id="606816">
    <property type="type" value="gene"/>
</dbReference>
<dbReference type="neXtProt" id="NX_Q9NXL6"/>
<dbReference type="OpenTargets" id="ENSG00000072858"/>
<dbReference type="PharmGKB" id="PA134923837"/>
<dbReference type="VEuPathDB" id="HostDB:ENSG00000072858"/>
<dbReference type="eggNOG" id="ENOG502QUXZ">
    <property type="taxonomic scope" value="Eukaryota"/>
</dbReference>
<dbReference type="GeneTree" id="ENSGT00390000010091"/>
<dbReference type="HOGENOM" id="CLU_357018_0_0_1"/>
<dbReference type="InParanoid" id="Q9NXL6"/>
<dbReference type="OMA" id="SDTDMGI"/>
<dbReference type="OrthoDB" id="416618at2759"/>
<dbReference type="PAN-GO" id="Q9NXL6">
    <property type="GO annotations" value="5 GO annotations based on evolutionary models"/>
</dbReference>
<dbReference type="PhylomeDB" id="Q9NXL6"/>
<dbReference type="TreeFam" id="TF313076"/>
<dbReference type="PathwayCommons" id="Q9NXL6"/>
<dbReference type="SignaLink" id="Q9NXL6"/>
<dbReference type="BioGRID-ORCS" id="54847">
    <property type="hits" value="7 hits in 1141 CRISPR screens"/>
</dbReference>
<dbReference type="ChiTaRS" id="SIDT1">
    <property type="organism name" value="human"/>
</dbReference>
<dbReference type="GenomeRNAi" id="54847"/>
<dbReference type="Pharos" id="Q9NXL6">
    <property type="development level" value="Tbio"/>
</dbReference>
<dbReference type="PRO" id="PR:Q9NXL6"/>
<dbReference type="Proteomes" id="UP000005640">
    <property type="component" value="Chromosome 3"/>
</dbReference>
<dbReference type="RNAct" id="Q9NXL6">
    <property type="molecule type" value="protein"/>
</dbReference>
<dbReference type="Bgee" id="ENSG00000072858">
    <property type="expression patterns" value="Expressed in right hemisphere of cerebellum and 155 other cell types or tissues"/>
</dbReference>
<dbReference type="GO" id="GO:0005764">
    <property type="term" value="C:lysosome"/>
    <property type="evidence" value="ECO:0000318"/>
    <property type="project" value="GO_Central"/>
</dbReference>
<dbReference type="GO" id="GO:0005886">
    <property type="term" value="C:plasma membrane"/>
    <property type="evidence" value="ECO:0000318"/>
    <property type="project" value="GO_Central"/>
</dbReference>
<dbReference type="GO" id="GO:0015485">
    <property type="term" value="F:cholesterol binding"/>
    <property type="evidence" value="ECO:0000314"/>
    <property type="project" value="UniProtKB"/>
</dbReference>
<dbReference type="GO" id="GO:0003725">
    <property type="term" value="F:double-stranded RNA binding"/>
    <property type="evidence" value="ECO:0000318"/>
    <property type="project" value="GO_Central"/>
</dbReference>
<dbReference type="GO" id="GO:0051033">
    <property type="term" value="F:RNA transmembrane transporter activity"/>
    <property type="evidence" value="ECO:0000318"/>
    <property type="project" value="GO_Central"/>
</dbReference>
<dbReference type="GO" id="GO:0050658">
    <property type="term" value="P:RNA transport"/>
    <property type="evidence" value="ECO:0000318"/>
    <property type="project" value="GO_Central"/>
</dbReference>
<dbReference type="InterPro" id="IPR025958">
    <property type="entry name" value="SID1_TM_fam"/>
</dbReference>
<dbReference type="PANTHER" id="PTHR12185:SF15">
    <property type="entry name" value="SID1 TRANSMEMBRANE FAMILY MEMBER 1"/>
    <property type="match status" value="1"/>
</dbReference>
<dbReference type="PANTHER" id="PTHR12185">
    <property type="entry name" value="SID1 TRANSMEMBRANE FAMILY MEMEBER"/>
    <property type="match status" value="1"/>
</dbReference>
<dbReference type="Pfam" id="PF13965">
    <property type="entry name" value="SID-1_RNA_chan"/>
    <property type="match status" value="1"/>
</dbReference>
<proteinExistence type="evidence at protein level"/>
<evidence type="ECO:0000250" key="1">
    <source>
        <dbReference type="UniProtKB" id="Q6AXF6"/>
    </source>
</evidence>
<evidence type="ECO:0000255" key="2"/>
<evidence type="ECO:0000256" key="3">
    <source>
        <dbReference type="SAM" id="MobiDB-lite"/>
    </source>
</evidence>
<evidence type="ECO:0000303" key="4">
    <source>
    </source>
</evidence>
<evidence type="ECO:0000305" key="5"/>
<evidence type="ECO:0007829" key="6">
    <source>
        <dbReference type="PDB" id="8J6M"/>
    </source>
</evidence>
<evidence type="ECO:0007829" key="7">
    <source>
        <dbReference type="PDB" id="8JUL"/>
    </source>
</evidence>
<evidence type="ECO:0007829" key="8">
    <source>
        <dbReference type="PDB" id="8JUN"/>
    </source>
</evidence>
<evidence type="ECO:0007829" key="9">
    <source>
        <dbReference type="PDB" id="8KCW"/>
    </source>
</evidence>
<evidence type="ECO:0007829" key="10">
    <source>
        <dbReference type="PDB" id="8V38"/>
    </source>
</evidence>
<evidence type="ECO:0007829" key="11">
    <source>
        <dbReference type="PDB" id="8WOR"/>
    </source>
</evidence>
<protein>
    <recommendedName>
        <fullName>SID1 transmembrane family member 1</fullName>
    </recommendedName>
</protein>
<reference key="1">
    <citation type="journal article" date="2004" name="Nat. Genet.">
        <title>Complete sequencing and characterization of 21,243 full-length human cDNAs.</title>
        <authorList>
            <person name="Ota T."/>
            <person name="Suzuki Y."/>
            <person name="Nishikawa T."/>
            <person name="Otsuki T."/>
            <person name="Sugiyama T."/>
            <person name="Irie R."/>
            <person name="Wakamatsu A."/>
            <person name="Hayashi K."/>
            <person name="Sato H."/>
            <person name="Nagai K."/>
            <person name="Kimura K."/>
            <person name="Makita H."/>
            <person name="Sekine M."/>
            <person name="Obayashi M."/>
            <person name="Nishi T."/>
            <person name="Shibahara T."/>
            <person name="Tanaka T."/>
            <person name="Ishii S."/>
            <person name="Yamamoto J."/>
            <person name="Saito K."/>
            <person name="Kawai Y."/>
            <person name="Isono Y."/>
            <person name="Nakamura Y."/>
            <person name="Nagahari K."/>
            <person name="Murakami K."/>
            <person name="Yasuda T."/>
            <person name="Iwayanagi T."/>
            <person name="Wagatsuma M."/>
            <person name="Shiratori A."/>
            <person name="Sudo H."/>
            <person name="Hosoiri T."/>
            <person name="Kaku Y."/>
            <person name="Kodaira H."/>
            <person name="Kondo H."/>
            <person name="Sugawara M."/>
            <person name="Takahashi M."/>
            <person name="Kanda K."/>
            <person name="Yokoi T."/>
            <person name="Furuya T."/>
            <person name="Kikkawa E."/>
            <person name="Omura Y."/>
            <person name="Abe K."/>
            <person name="Kamihara K."/>
            <person name="Katsuta N."/>
            <person name="Sato K."/>
            <person name="Tanikawa M."/>
            <person name="Yamazaki M."/>
            <person name="Ninomiya K."/>
            <person name="Ishibashi T."/>
            <person name="Yamashita H."/>
            <person name="Murakawa K."/>
            <person name="Fujimori K."/>
            <person name="Tanai H."/>
            <person name="Kimata M."/>
            <person name="Watanabe M."/>
            <person name="Hiraoka S."/>
            <person name="Chiba Y."/>
            <person name="Ishida S."/>
            <person name="Ono Y."/>
            <person name="Takiguchi S."/>
            <person name="Watanabe S."/>
            <person name="Yosida M."/>
            <person name="Hotuta T."/>
            <person name="Kusano J."/>
            <person name="Kanehori K."/>
            <person name="Takahashi-Fujii A."/>
            <person name="Hara H."/>
            <person name="Tanase T.-O."/>
            <person name="Nomura Y."/>
            <person name="Togiya S."/>
            <person name="Komai F."/>
            <person name="Hara R."/>
            <person name="Takeuchi K."/>
            <person name="Arita M."/>
            <person name="Imose N."/>
            <person name="Musashino K."/>
            <person name="Yuuki H."/>
            <person name="Oshima A."/>
            <person name="Sasaki N."/>
            <person name="Aotsuka S."/>
            <person name="Yoshikawa Y."/>
            <person name="Matsunawa H."/>
            <person name="Ichihara T."/>
            <person name="Shiohata N."/>
            <person name="Sano S."/>
            <person name="Moriya S."/>
            <person name="Momiyama H."/>
            <person name="Satoh N."/>
            <person name="Takami S."/>
            <person name="Terashima Y."/>
            <person name="Suzuki O."/>
            <person name="Nakagawa S."/>
            <person name="Senoh A."/>
            <person name="Mizoguchi H."/>
            <person name="Goto Y."/>
            <person name="Shimizu F."/>
            <person name="Wakebe H."/>
            <person name="Hishigaki H."/>
            <person name="Watanabe T."/>
            <person name="Sugiyama A."/>
            <person name="Takemoto M."/>
            <person name="Kawakami B."/>
            <person name="Yamazaki M."/>
            <person name="Watanabe K."/>
            <person name="Kumagai A."/>
            <person name="Itakura S."/>
            <person name="Fukuzumi Y."/>
            <person name="Fujimori Y."/>
            <person name="Komiyama M."/>
            <person name="Tashiro H."/>
            <person name="Tanigami A."/>
            <person name="Fujiwara T."/>
            <person name="Ono T."/>
            <person name="Yamada K."/>
            <person name="Fujii Y."/>
            <person name="Ozaki K."/>
            <person name="Hirao M."/>
            <person name="Ohmori Y."/>
            <person name="Kawabata A."/>
            <person name="Hikiji T."/>
            <person name="Kobatake N."/>
            <person name="Inagaki H."/>
            <person name="Ikema Y."/>
            <person name="Okamoto S."/>
            <person name="Okitani R."/>
            <person name="Kawakami T."/>
            <person name="Noguchi S."/>
            <person name="Itoh T."/>
            <person name="Shigeta K."/>
            <person name="Senba T."/>
            <person name="Matsumura K."/>
            <person name="Nakajima Y."/>
            <person name="Mizuno T."/>
            <person name="Morinaga M."/>
            <person name="Sasaki M."/>
            <person name="Togashi T."/>
            <person name="Oyama M."/>
            <person name="Hata H."/>
            <person name="Watanabe M."/>
            <person name="Komatsu T."/>
            <person name="Mizushima-Sugano J."/>
            <person name="Satoh T."/>
            <person name="Shirai Y."/>
            <person name="Takahashi Y."/>
            <person name="Nakagawa K."/>
            <person name="Okumura K."/>
            <person name="Nagase T."/>
            <person name="Nomura N."/>
            <person name="Kikuchi H."/>
            <person name="Masuho Y."/>
            <person name="Yamashita R."/>
            <person name="Nakai K."/>
            <person name="Yada T."/>
            <person name="Nakamura Y."/>
            <person name="Ohara O."/>
            <person name="Isogai T."/>
            <person name="Sugano S."/>
        </authorList>
    </citation>
    <scope>NUCLEOTIDE SEQUENCE [LARGE SCALE MRNA] (ISOFORM 1)</scope>
    <source>
        <tissue>Colon</tissue>
    </source>
</reference>
<reference key="2">
    <citation type="journal article" date="2006" name="Nature">
        <title>The DNA sequence, annotation and analysis of human chromosome 3.</title>
        <authorList>
            <person name="Muzny D.M."/>
            <person name="Scherer S.E."/>
            <person name="Kaul R."/>
            <person name="Wang J."/>
            <person name="Yu J."/>
            <person name="Sudbrak R."/>
            <person name="Buhay C.J."/>
            <person name="Chen R."/>
            <person name="Cree A."/>
            <person name="Ding Y."/>
            <person name="Dugan-Rocha S."/>
            <person name="Gill R."/>
            <person name="Gunaratne P."/>
            <person name="Harris R.A."/>
            <person name="Hawes A.C."/>
            <person name="Hernandez J."/>
            <person name="Hodgson A.V."/>
            <person name="Hume J."/>
            <person name="Jackson A."/>
            <person name="Khan Z.M."/>
            <person name="Kovar-Smith C."/>
            <person name="Lewis L.R."/>
            <person name="Lozado R.J."/>
            <person name="Metzker M.L."/>
            <person name="Milosavljevic A."/>
            <person name="Miner G.R."/>
            <person name="Morgan M.B."/>
            <person name="Nazareth L.V."/>
            <person name="Scott G."/>
            <person name="Sodergren E."/>
            <person name="Song X.-Z."/>
            <person name="Steffen D."/>
            <person name="Wei S."/>
            <person name="Wheeler D.A."/>
            <person name="Wright M.W."/>
            <person name="Worley K.C."/>
            <person name="Yuan Y."/>
            <person name="Zhang Z."/>
            <person name="Adams C.Q."/>
            <person name="Ansari-Lari M.A."/>
            <person name="Ayele M."/>
            <person name="Brown M.J."/>
            <person name="Chen G."/>
            <person name="Chen Z."/>
            <person name="Clendenning J."/>
            <person name="Clerc-Blankenburg K.P."/>
            <person name="Chen R."/>
            <person name="Chen Z."/>
            <person name="Davis C."/>
            <person name="Delgado O."/>
            <person name="Dinh H.H."/>
            <person name="Dong W."/>
            <person name="Draper H."/>
            <person name="Ernst S."/>
            <person name="Fu G."/>
            <person name="Gonzalez-Garay M.L."/>
            <person name="Garcia D.K."/>
            <person name="Gillett W."/>
            <person name="Gu J."/>
            <person name="Hao B."/>
            <person name="Haugen E."/>
            <person name="Havlak P."/>
            <person name="He X."/>
            <person name="Hennig S."/>
            <person name="Hu S."/>
            <person name="Huang W."/>
            <person name="Jackson L.R."/>
            <person name="Jacob L.S."/>
            <person name="Kelly S.H."/>
            <person name="Kube M."/>
            <person name="Levy R."/>
            <person name="Li Z."/>
            <person name="Liu B."/>
            <person name="Liu J."/>
            <person name="Liu W."/>
            <person name="Lu J."/>
            <person name="Maheshwari M."/>
            <person name="Nguyen B.-V."/>
            <person name="Okwuonu G.O."/>
            <person name="Palmeiri A."/>
            <person name="Pasternak S."/>
            <person name="Perez L.M."/>
            <person name="Phelps K.A."/>
            <person name="Plopper F.J."/>
            <person name="Qiang B."/>
            <person name="Raymond C."/>
            <person name="Rodriguez R."/>
            <person name="Saenphimmachak C."/>
            <person name="Santibanez J."/>
            <person name="Shen H."/>
            <person name="Shen Y."/>
            <person name="Subramanian S."/>
            <person name="Tabor P.E."/>
            <person name="Verduzco D."/>
            <person name="Waldron L."/>
            <person name="Wang J."/>
            <person name="Wang J."/>
            <person name="Wang Q."/>
            <person name="Williams G.A."/>
            <person name="Wong G.K.-S."/>
            <person name="Yao Z."/>
            <person name="Zhang J."/>
            <person name="Zhang X."/>
            <person name="Zhao G."/>
            <person name="Zhou J."/>
            <person name="Zhou Y."/>
            <person name="Nelson D."/>
            <person name="Lehrach H."/>
            <person name="Reinhardt R."/>
            <person name="Naylor S.L."/>
            <person name="Yang H."/>
            <person name="Olson M."/>
            <person name="Weinstock G."/>
            <person name="Gibbs R.A."/>
        </authorList>
    </citation>
    <scope>NUCLEOTIDE SEQUENCE [LARGE SCALE GENOMIC DNA]</scope>
</reference>
<reference key="3">
    <citation type="journal article" date="2004" name="Genome Res.">
        <title>The status, quality, and expansion of the NIH full-length cDNA project: the Mammalian Gene Collection (MGC).</title>
        <authorList>
            <consortium name="The MGC Project Team"/>
        </authorList>
    </citation>
    <scope>NUCLEOTIDE SEQUENCE [LARGE SCALE MRNA] (ISOFORM 2)</scope>
</reference>
<organism>
    <name type="scientific">Homo sapiens</name>
    <name type="common">Human</name>
    <dbReference type="NCBI Taxonomy" id="9606"/>
    <lineage>
        <taxon>Eukaryota</taxon>
        <taxon>Metazoa</taxon>
        <taxon>Chordata</taxon>
        <taxon>Craniata</taxon>
        <taxon>Vertebrata</taxon>
        <taxon>Euteleostomi</taxon>
        <taxon>Mammalia</taxon>
        <taxon>Eutheria</taxon>
        <taxon>Euarchontoglires</taxon>
        <taxon>Primates</taxon>
        <taxon>Haplorrhini</taxon>
        <taxon>Catarrhini</taxon>
        <taxon>Hominidae</taxon>
        <taxon>Homo</taxon>
    </lineage>
</organism>
<comment type="function">
    <text evidence="1">In vitro binds long double-stranded RNA (dsRNA) (500 and 700 base pairs), but not dsRNA shorter than 300 bp. Not involved in RNA autophagy, a process in which RNA is directly imported into lysosomes in an ATP-dependent manner, and degraded.</text>
</comment>
<comment type="subcellular location">
    <subcellularLocation>
        <location evidence="5">Membrane</location>
        <topology evidence="5">Multi-pass membrane protein</topology>
    </subcellularLocation>
</comment>
<comment type="alternative products">
    <event type="alternative splicing"/>
    <isoform>
        <id>Q9NXL6-1</id>
        <name>1</name>
        <sequence type="displayed"/>
    </isoform>
    <isoform>
        <id>Q9NXL6-2</id>
        <name>2</name>
        <sequence type="described" ref="VSP_039174"/>
    </isoform>
</comment>
<comment type="similarity">
    <text evidence="5">Belongs to the SID1 family.</text>
</comment>
<accession>Q9NXL6</accession>
<accession>Q17RR4</accession>
<feature type="signal peptide" evidence="2">
    <location>
        <begin position="1"/>
        <end position="19"/>
    </location>
</feature>
<feature type="chain" id="PRO_0000032575" description="SID1 transmembrane family member 1">
    <location>
        <begin position="20"/>
        <end position="827"/>
    </location>
</feature>
<feature type="topological domain" description="Extracellular" evidence="2">
    <location>
        <begin position="20"/>
        <end position="309"/>
    </location>
</feature>
<feature type="transmembrane region" description="Helical" evidence="2">
    <location>
        <begin position="310"/>
        <end position="330"/>
    </location>
</feature>
<feature type="topological domain" description="Cytoplasmic" evidence="2">
    <location>
        <begin position="331"/>
        <end position="442"/>
    </location>
</feature>
<feature type="transmembrane region" description="Helical" evidence="2">
    <location>
        <begin position="443"/>
        <end position="463"/>
    </location>
</feature>
<feature type="topological domain" description="Extracellular" evidence="2">
    <location>
        <begin position="464"/>
        <end position="494"/>
    </location>
</feature>
<feature type="transmembrane region" description="Helical" evidence="2">
    <location>
        <begin position="495"/>
        <end position="515"/>
    </location>
</feature>
<feature type="topological domain" description="Cytoplasmic" evidence="2">
    <location>
        <begin position="516"/>
        <end position="541"/>
    </location>
</feature>
<feature type="transmembrane region" description="Helical" evidence="2">
    <location>
        <begin position="542"/>
        <end position="562"/>
    </location>
</feature>
<feature type="topological domain" description="Extracellular" evidence="2">
    <location>
        <begin position="563"/>
        <end position="572"/>
    </location>
</feature>
<feature type="transmembrane region" description="Helical" evidence="2">
    <location>
        <begin position="573"/>
        <end position="590"/>
    </location>
</feature>
<feature type="topological domain" description="Cytoplasmic" evidence="2">
    <location>
        <begin position="591"/>
        <end position="600"/>
    </location>
</feature>
<feature type="transmembrane region" description="Helical" evidence="2">
    <location>
        <begin position="601"/>
        <end position="621"/>
    </location>
</feature>
<feature type="topological domain" description="Extracellular" evidence="2">
    <location>
        <begin position="622"/>
        <end position="626"/>
    </location>
</feature>
<feature type="transmembrane region" description="Helical" evidence="2">
    <location>
        <begin position="627"/>
        <end position="647"/>
    </location>
</feature>
<feature type="topological domain" description="Cytoplasmic" evidence="2">
    <location>
        <begin position="648"/>
        <end position="683"/>
    </location>
</feature>
<feature type="transmembrane region" description="Helical" evidence="2">
    <location>
        <begin position="684"/>
        <end position="704"/>
    </location>
</feature>
<feature type="topological domain" description="Extracellular" evidence="2">
    <location>
        <begin position="705"/>
        <end position="710"/>
    </location>
</feature>
<feature type="transmembrane region" description="Helical" evidence="2">
    <location>
        <begin position="711"/>
        <end position="731"/>
    </location>
</feature>
<feature type="topological domain" description="Cytoplasmic" evidence="2">
    <location>
        <begin position="732"/>
        <end position="741"/>
    </location>
</feature>
<feature type="transmembrane region" description="Helical" evidence="2">
    <location>
        <begin position="742"/>
        <end position="762"/>
    </location>
</feature>
<feature type="topological domain" description="Extracellular" evidence="2">
    <location>
        <begin position="763"/>
        <end position="791"/>
    </location>
</feature>
<feature type="transmembrane region" description="Helical" evidence="2">
    <location>
        <begin position="792"/>
        <end position="812"/>
    </location>
</feature>
<feature type="topological domain" description="Cytoplasmic" evidence="2">
    <location>
        <begin position="813"/>
        <end position="827"/>
    </location>
</feature>
<feature type="region of interest" description="Disordered" evidence="3">
    <location>
        <begin position="355"/>
        <end position="408"/>
    </location>
</feature>
<feature type="compositionally biased region" description="Polar residues" evidence="3">
    <location>
        <begin position="364"/>
        <end position="374"/>
    </location>
</feature>
<feature type="compositionally biased region" description="Low complexity" evidence="3">
    <location>
        <begin position="375"/>
        <end position="397"/>
    </location>
</feature>
<feature type="compositionally biased region" description="Acidic residues" evidence="3">
    <location>
        <begin position="398"/>
        <end position="408"/>
    </location>
</feature>
<feature type="glycosylation site" description="N-linked (GlcNAc...) asparagine" evidence="2">
    <location>
        <position position="57"/>
    </location>
</feature>
<feature type="glycosylation site" description="N-linked (GlcNAc...) asparagine" evidence="2">
    <location>
        <position position="67"/>
    </location>
</feature>
<feature type="glycosylation site" description="N-linked (GlcNAc...) asparagine" evidence="2">
    <location>
        <position position="83"/>
    </location>
</feature>
<feature type="glycosylation site" description="N-linked (GlcNAc...) asparagine" evidence="2">
    <location>
        <position position="136"/>
    </location>
</feature>
<feature type="glycosylation site" description="N-linked (GlcNAc...) asparagine" evidence="2">
    <location>
        <position position="282"/>
    </location>
</feature>
<feature type="glycosylation site" description="N-linked (GlcNAc...) asparagine" evidence="2">
    <location>
        <position position="471"/>
    </location>
</feature>
<feature type="glycosylation site" description="N-linked (GlcNAc...) asparagine" evidence="2">
    <location>
        <position position="567"/>
    </location>
</feature>
<feature type="glycosylation site" description="N-linked (GlcNAc...) asparagine" evidence="2">
    <location>
        <position position="764"/>
    </location>
</feature>
<feature type="splice variant" id="VSP_039174" description="In isoform 2." evidence="4">
    <original>I</original>
    <variation>IDVSDT</variation>
    <location>
        <position position="655"/>
    </location>
</feature>
<feature type="sequence variant" id="VAR_061793" description="In dbSNP:rs9879313.">
    <original>G</original>
    <variation>S</variation>
    <location>
        <position position="3"/>
    </location>
</feature>
<feature type="sequence variant" id="VAR_057184" description="In dbSNP:rs2271496.">
    <original>V</original>
    <variation>M</variation>
    <location>
        <position position="78"/>
    </location>
</feature>
<feature type="sequence variant" id="VAR_057185" description="In dbSNP:rs33990195.">
    <original>T</original>
    <variation>I</variation>
    <location>
        <position position="363"/>
    </location>
</feature>
<feature type="sequence conflict" description="In Ref. 1; BAA90994." evidence="5" ref="1">
    <original>Q</original>
    <variation>R</variation>
    <location>
        <position position="572"/>
    </location>
</feature>
<feature type="helix" evidence="11">
    <location>
        <begin position="39"/>
        <end position="42"/>
    </location>
</feature>
<feature type="strand" evidence="7">
    <location>
        <begin position="44"/>
        <end position="46"/>
    </location>
</feature>
<feature type="strand" evidence="8">
    <location>
        <begin position="51"/>
        <end position="56"/>
    </location>
</feature>
<feature type="turn" evidence="7">
    <location>
        <begin position="58"/>
        <end position="60"/>
    </location>
</feature>
<feature type="strand" evidence="8">
    <location>
        <begin position="62"/>
        <end position="70"/>
    </location>
</feature>
<feature type="strand" evidence="9">
    <location>
        <begin position="72"/>
        <end position="74"/>
    </location>
</feature>
<feature type="strand" evidence="8">
    <location>
        <begin position="78"/>
        <end position="83"/>
    </location>
</feature>
<feature type="strand" evidence="11">
    <location>
        <begin position="89"/>
        <end position="91"/>
    </location>
</feature>
<feature type="strand" evidence="8">
    <location>
        <begin position="93"/>
        <end position="98"/>
    </location>
</feature>
<feature type="strand" evidence="8">
    <location>
        <begin position="103"/>
        <end position="113"/>
    </location>
</feature>
<feature type="strand" evidence="11">
    <location>
        <begin position="115"/>
        <end position="117"/>
    </location>
</feature>
<feature type="strand" evidence="8">
    <location>
        <begin position="119"/>
        <end position="129"/>
    </location>
</feature>
<feature type="turn" evidence="8">
    <location>
        <begin position="136"/>
        <end position="138"/>
    </location>
</feature>
<feature type="strand" evidence="8">
    <location>
        <begin position="140"/>
        <end position="150"/>
    </location>
</feature>
<feature type="strand" evidence="8">
    <location>
        <begin position="157"/>
        <end position="165"/>
    </location>
</feature>
<feature type="strand" evidence="8">
    <location>
        <begin position="177"/>
        <end position="182"/>
    </location>
</feature>
<feature type="strand" evidence="9">
    <location>
        <begin position="183"/>
        <end position="185"/>
    </location>
</feature>
<feature type="strand" evidence="8">
    <location>
        <begin position="187"/>
        <end position="192"/>
    </location>
</feature>
<feature type="strand" evidence="8">
    <location>
        <begin position="199"/>
        <end position="205"/>
    </location>
</feature>
<feature type="strand" evidence="10">
    <location>
        <begin position="207"/>
        <end position="209"/>
    </location>
</feature>
<feature type="strand" evidence="8">
    <location>
        <begin position="213"/>
        <end position="218"/>
    </location>
</feature>
<feature type="strand" evidence="8">
    <location>
        <begin position="220"/>
        <end position="222"/>
    </location>
</feature>
<feature type="turn" evidence="8">
    <location>
        <begin position="228"/>
        <end position="232"/>
    </location>
</feature>
<feature type="strand" evidence="8">
    <location>
        <begin position="233"/>
        <end position="249"/>
    </location>
</feature>
<feature type="helix" evidence="8">
    <location>
        <begin position="250"/>
        <end position="252"/>
    </location>
</feature>
<feature type="strand" evidence="8">
    <location>
        <begin position="256"/>
        <end position="264"/>
    </location>
</feature>
<feature type="strand" evidence="8">
    <location>
        <begin position="266"/>
        <end position="268"/>
    </location>
</feature>
<feature type="helix" evidence="8">
    <location>
        <begin position="269"/>
        <end position="271"/>
    </location>
</feature>
<feature type="strand" evidence="8">
    <location>
        <begin position="283"/>
        <end position="285"/>
    </location>
</feature>
<feature type="strand" evidence="8">
    <location>
        <begin position="291"/>
        <end position="299"/>
    </location>
</feature>
<feature type="helix" evidence="8">
    <location>
        <begin position="303"/>
        <end position="331"/>
    </location>
</feature>
<feature type="turn" evidence="11">
    <location>
        <begin position="335"/>
        <end position="337"/>
    </location>
</feature>
<feature type="helix" evidence="8">
    <location>
        <begin position="442"/>
        <end position="469"/>
    </location>
</feature>
<feature type="turn" evidence="8">
    <location>
        <begin position="470"/>
        <end position="474"/>
    </location>
</feature>
<feature type="strand" evidence="9">
    <location>
        <begin position="477"/>
        <end position="479"/>
    </location>
</feature>
<feature type="helix" evidence="11">
    <location>
        <begin position="483"/>
        <end position="485"/>
    </location>
</feature>
<feature type="strand" evidence="7">
    <location>
        <begin position="489"/>
        <end position="491"/>
    </location>
</feature>
<feature type="helix" evidence="8">
    <location>
        <begin position="495"/>
        <end position="499"/>
    </location>
</feature>
<feature type="helix" evidence="8">
    <location>
        <begin position="502"/>
        <end position="527"/>
    </location>
</feature>
<feature type="helix" evidence="8">
    <location>
        <begin position="531"/>
        <end position="534"/>
    </location>
</feature>
<feature type="strand" evidence="8">
    <location>
        <begin position="535"/>
        <end position="538"/>
    </location>
</feature>
<feature type="helix" evidence="8">
    <location>
        <begin position="543"/>
        <end position="564"/>
    </location>
</feature>
<feature type="turn" evidence="8">
    <location>
        <begin position="568"/>
        <end position="570"/>
    </location>
</feature>
<feature type="helix" evidence="8">
    <location>
        <begin position="571"/>
        <end position="574"/>
    </location>
</feature>
<feature type="helix" evidence="8">
    <location>
        <begin position="577"/>
        <end position="591"/>
    </location>
</feature>
<feature type="turn" evidence="8">
    <location>
        <begin position="600"/>
        <end position="602"/>
    </location>
</feature>
<feature type="helix" evidence="8">
    <location>
        <begin position="603"/>
        <end position="620"/>
    </location>
</feature>
<feature type="helix" evidence="8">
    <location>
        <begin position="626"/>
        <end position="646"/>
    </location>
</feature>
<feature type="helix" evidence="7">
    <location>
        <begin position="655"/>
        <end position="658"/>
    </location>
</feature>
<feature type="helix" evidence="8">
    <location>
        <begin position="659"/>
        <end position="667"/>
    </location>
</feature>
<feature type="turn" evidence="8">
    <location>
        <begin position="668"/>
        <end position="672"/>
    </location>
</feature>
<feature type="helix" evidence="8">
    <location>
        <begin position="681"/>
        <end position="704"/>
    </location>
</feature>
<feature type="helix" evidence="8">
    <location>
        <begin position="709"/>
        <end position="734"/>
    </location>
</feature>
<feature type="helix" evidence="8">
    <location>
        <begin position="741"/>
        <end position="761"/>
    </location>
</feature>
<feature type="strand" evidence="8">
    <location>
        <begin position="768"/>
        <end position="770"/>
    </location>
</feature>
<feature type="helix" evidence="8">
    <location>
        <begin position="772"/>
        <end position="776"/>
    </location>
</feature>
<feature type="turn" evidence="8">
    <location>
        <begin position="785"/>
        <end position="787"/>
    </location>
</feature>
<feature type="helix" evidence="8">
    <location>
        <begin position="790"/>
        <end position="811"/>
    </location>
</feature>
<feature type="helix" evidence="8">
    <location>
        <begin position="812"/>
        <end position="815"/>
    </location>
</feature>
<feature type="strand" evidence="8">
    <location>
        <begin position="818"/>
        <end position="820"/>
    </location>
</feature>
<feature type="turn" evidence="6">
    <location>
        <begin position="821"/>
        <end position="823"/>
    </location>
</feature>
<gene>
    <name type="primary">SIDT1</name>
</gene>
<keyword id="KW-0002">3D-structure</keyword>
<keyword id="KW-0025">Alternative splicing</keyword>
<keyword id="KW-0325">Glycoprotein</keyword>
<keyword id="KW-0472">Membrane</keyword>
<keyword id="KW-1267">Proteomics identification</keyword>
<keyword id="KW-1185">Reference proteome</keyword>
<keyword id="KW-0694">RNA-binding</keyword>
<keyword id="KW-0732">Signal</keyword>
<keyword id="KW-0812">Transmembrane</keyword>
<keyword id="KW-1133">Transmembrane helix</keyword>
<sequence length="827" mass="93839">MRGCLRLALLCALPWLLLAASPGHPAKSPRQPPAPRRDPFDAARGADFDHVYSGVVNLSTENIYSFNYTSQPDQVTAVRVYVNSSSENLNYPVLVVVRQQKEVLSWQVPLLFQGLYQRSYNYQEVSRTLCPSEATNETGPLQQLIFVDVASMAPLGAQYKLLVTKLKHFQLRTNVAFHFTASPSQPQYFLYKFPKDVDSVIIKVVSEMAYPCSVVSVQNIMCPVYDLDHNVEFNGVYQSMTKKAAITLQKKDFPGEQFFVVFVIKPEDYACGGSFFIQEKENQTWNLQRKKNLEVTIVPSIKESVYVKSSLFSVFIFLSFYLGCLLVGFVHYLRFQRKSIDGSFGSNDGSGNMVASHPIAASTPEGSNYGTIDESSSSPGRQMSSSDGGPPGQSDTDSSVEESDFDTMPDIESDKNIIRTKMFLYLSDLSRKDRRIVSKKYKIYFWNIITIAVFYALPVIQLVITYQTVVNVTGNQDICYYNFLCAHPLGVLSAFNNILSNLGHVLLGFLFLLIVLRRDILHRRALEAKDIFAVEYGIPKHFGLFYAMGIALMMEGVLSACYHVCPNYSNFQFDTSFMYMIAGLCMLKLYQTRHPDINASAYSAYASFAVVIMVTVLGVVFGKNDVWFWVIFSAIHVLASLALSTQIYYMGRFKIDLGIFRRAAMVFYTDCIQQCSRPLYMDRMVLLVVGNLVNWSFALFGLIYRPRDFASYMLGIFICNLLLYLAFYIIMKLRSSEKVLPVPLFCIVATAVMWAAALYFFFQNLSSWEGTPAESREKNRECILLDFFDDHDIWHFLSATALFFSFLVLLTLDDDLDVVRRDQIPVF</sequence>
<name>SIDT1_HUMAN</name>